<dbReference type="EC" id="4.2.3.201" evidence="3 4"/>
<dbReference type="EC" id="4.2.3.202" evidence="3 4"/>
<dbReference type="EC" id="4.2.3.203" evidence="3 4"/>
<dbReference type="EMBL" id="CM000914">
    <property type="protein sequence ID" value="EFG04252.2"/>
    <property type="molecule type" value="Genomic_DNA"/>
</dbReference>
<dbReference type="RefSeq" id="WP_003963279.1">
    <property type="nucleotide sequence ID" value="NZ_CM000914.1"/>
</dbReference>
<dbReference type="PDB" id="8B4L">
    <property type="method" value="X-ray"/>
    <property type="resolution" value="3.39 A"/>
    <property type="chains" value="A/B/C/D/E/F=1-321"/>
</dbReference>
<dbReference type="PDB" id="8B4M">
    <property type="method" value="X-ray"/>
    <property type="resolution" value="3.04 A"/>
    <property type="chains" value="A/B/C/D/E/F=1-321"/>
</dbReference>
<dbReference type="PDBsum" id="8B4L"/>
<dbReference type="PDBsum" id="8B4M"/>
<dbReference type="SMR" id="D5SK09"/>
<dbReference type="GeneID" id="93733877"/>
<dbReference type="KEGG" id="sclf:BB341_28045"/>
<dbReference type="OrthoDB" id="2989600at2"/>
<dbReference type="UniPathway" id="UPA00213"/>
<dbReference type="Proteomes" id="UP000002357">
    <property type="component" value="Plasmid pSCL4"/>
</dbReference>
<dbReference type="GO" id="GO:0046872">
    <property type="term" value="F:metal ion binding"/>
    <property type="evidence" value="ECO:0007669"/>
    <property type="project" value="UniProtKB-KW"/>
</dbReference>
<dbReference type="GO" id="GO:0010333">
    <property type="term" value="F:terpene synthase activity"/>
    <property type="evidence" value="ECO:0007669"/>
    <property type="project" value="InterPro"/>
</dbReference>
<dbReference type="Gene3D" id="1.10.600.10">
    <property type="entry name" value="Farnesyl Diphosphate Synthase"/>
    <property type="match status" value="1"/>
</dbReference>
<dbReference type="InterPro" id="IPR008949">
    <property type="entry name" value="Isoprenoid_synthase_dom_sf"/>
</dbReference>
<dbReference type="InterPro" id="IPR034686">
    <property type="entry name" value="Terpene_cyclase-like_2"/>
</dbReference>
<dbReference type="Pfam" id="PF19086">
    <property type="entry name" value="Terpene_syn_C_2"/>
    <property type="match status" value="1"/>
</dbReference>
<dbReference type="SFLD" id="SFLDS00005">
    <property type="entry name" value="Isoprenoid_Synthase_Type_I"/>
    <property type="match status" value="1"/>
</dbReference>
<dbReference type="SFLD" id="SFLDG01020">
    <property type="entry name" value="Terpene_Cyclase_Like_2"/>
    <property type="match status" value="1"/>
</dbReference>
<dbReference type="SUPFAM" id="SSF48576">
    <property type="entry name" value="Terpenoid synthases"/>
    <property type="match status" value="1"/>
</dbReference>
<protein>
    <recommendedName>
        <fullName evidence="6">Hydropyrene synthase</fullName>
        <shortName evidence="6">HpS</shortName>
        <ecNumber evidence="3 4">4.2.3.201</ecNumber>
        <ecNumber evidence="3 4">4.2.3.202</ecNumber>
        <ecNumber evidence="3 4">4.2.3.203</ecNumber>
    </recommendedName>
    <alternativeName>
        <fullName evidence="7">Hydropyrenol synthase</fullName>
    </alternativeName>
    <alternativeName>
        <fullName evidence="7">Isoelisabethatriene synthase</fullName>
    </alternativeName>
</protein>
<evidence type="ECO:0000250" key="1">
    <source>
        <dbReference type="UniProtKB" id="B5GMG2"/>
    </source>
</evidence>
<evidence type="ECO:0000250" key="2">
    <source>
        <dbReference type="UniProtKB" id="Q54BE5"/>
    </source>
</evidence>
<evidence type="ECO:0000269" key="3">
    <source>
    </source>
</evidence>
<evidence type="ECO:0000269" key="4">
    <source>
    </source>
</evidence>
<evidence type="ECO:0000269" key="5">
    <source>
    </source>
</evidence>
<evidence type="ECO:0000303" key="6">
    <source>
    </source>
</evidence>
<evidence type="ECO:0000305" key="7"/>
<evidence type="ECO:0000312" key="8">
    <source>
        <dbReference type="EMBL" id="EFG04252.2"/>
    </source>
</evidence>
<evidence type="ECO:0007829" key="9">
    <source>
        <dbReference type="PDB" id="8B4L"/>
    </source>
</evidence>
<accession>D5SK09</accession>
<gene>
    <name evidence="8" type="ORF">SCLAV_p0765</name>
</gene>
<proteinExistence type="evidence at protein level"/>
<reference key="1">
    <citation type="journal article" date="2010" name="Genome Biol. Evol.">
        <title>The sequence of a 1.8-mb bacterial linear plasmid reveals a rich evolutionary reservoir of secondary metabolic pathways.</title>
        <authorList>
            <person name="Medema M.H."/>
            <person name="Trefzer A."/>
            <person name="Kovalchuk A."/>
            <person name="van den Berg M."/>
            <person name="Mueller U."/>
            <person name="Heijne W."/>
            <person name="Wu L."/>
            <person name="Alam M.T."/>
            <person name="Ronning C.M."/>
            <person name="Nierman W.C."/>
            <person name="Bovenberg R.A.L."/>
            <person name="Breitling R."/>
            <person name="Takano E."/>
        </authorList>
    </citation>
    <scope>NUCLEOTIDE SEQUENCE [LARGE SCALE GENOMIC DNA]</scope>
    <source>
        <strain>ATCC 27064 / DSM 738 / JCM 4710 / NBRC 13307 / NCIMB 12785 / NRRL 3585 / VKM Ac-602</strain>
    </source>
</reference>
<reference key="2">
    <citation type="journal article" date="2015" name="J. Antibiot.">
        <title>Novel terpenes generated by heterologous expression of bacterial terpene synthase genes in an engineered Streptomyces host.</title>
        <authorList>
            <person name="Yamada Y."/>
            <person name="Arima S."/>
            <person name="Nagamitsu T."/>
            <person name="Johmoto K."/>
            <person name="Uekusa H."/>
            <person name="Eguchi T."/>
            <person name="Shin-ya K."/>
            <person name="Cane D.E."/>
            <person name="Ikeda H."/>
        </authorList>
    </citation>
    <scope>FUNCTION</scope>
    <scope>CATALYTIC ACTIVITY</scope>
    <source>
        <strain>ATCC 27064 / DSM 738 / JCM 4710 / NBRC 13307 / NCIMB 12785 / NRRL 3585 / VKM Ac-602</strain>
    </source>
</reference>
<reference key="3">
    <citation type="journal article" date="2017" name="Chemistry">
        <title>Mechanisms of the Diterpene Cyclases beta-Pinacene Synthase from Dictyostelium discoideum and Hydropyrene Synthase from Streptomyces clavuligerus.</title>
        <authorList>
            <person name="Rinkel J."/>
            <person name="Rabe P."/>
            <person name="Chen X."/>
            <person name="Koellner T.G."/>
            <person name="Chen F."/>
            <person name="Dickschat J.S."/>
        </authorList>
    </citation>
    <scope>FUNCTION</scope>
    <scope>CATALYTIC ACTIVITY</scope>
    <source>
        <strain>ATCC 27064 / DSM 738 / JCM 4710 / NBRC 13307 / NCIMB 12785 / NRRL 3585 / VKM Ac-602</strain>
    </source>
</reference>
<reference key="4">
    <citation type="journal article" date="2022" name="Beilstein J. Org. Chem.">
        <title>Understanding the competing pathways leading to hydropyrene and isoelisabethatriene.</title>
        <authorList>
            <person name="Zev S."/>
            <person name="Ringel M."/>
            <person name="Driller R."/>
            <person name="Loll B."/>
            <person name="Brueck T."/>
            <person name="Major D.T."/>
        </authorList>
    </citation>
    <scope>FUNCTION</scope>
</reference>
<name>HPS_STRCL</name>
<organism>
    <name type="scientific">Streptomyces clavuligerus</name>
    <dbReference type="NCBI Taxonomy" id="1901"/>
    <lineage>
        <taxon>Bacteria</taxon>
        <taxon>Bacillati</taxon>
        <taxon>Actinomycetota</taxon>
        <taxon>Actinomycetes</taxon>
        <taxon>Kitasatosporales</taxon>
        <taxon>Streptomycetaceae</taxon>
        <taxon>Streptomyces</taxon>
    </lineage>
</organism>
<geneLocation type="plasmid" evidence="8">
    <name>pSCL4</name>
</geneLocation>
<feature type="chain" id="PRO_0000460189" description="Hydropyrene synthase">
    <location>
        <begin position="1"/>
        <end position="321"/>
    </location>
</feature>
<feature type="short sequence motif" description="DDxx(x)D/E motif" evidence="2">
    <location>
        <begin position="82"/>
        <end position="87"/>
    </location>
</feature>
<feature type="short sequence motif" description="NDxxSxxxD/E motif" evidence="2">
    <location>
        <begin position="225"/>
        <end position="233"/>
    </location>
</feature>
<feature type="binding site" evidence="1">
    <location>
        <position position="82"/>
    </location>
    <ligand>
        <name>Mg(2+)</name>
        <dbReference type="ChEBI" id="CHEBI:18420"/>
        <label>1</label>
    </ligand>
</feature>
<feature type="binding site" evidence="1">
    <location>
        <position position="82"/>
    </location>
    <ligand>
        <name>Mg(2+)</name>
        <dbReference type="ChEBI" id="CHEBI:18420"/>
        <label>2</label>
    </ligand>
</feature>
<feature type="binding site" evidence="1">
    <location>
        <position position="225"/>
    </location>
    <ligand>
        <name>Mg(2+)</name>
        <dbReference type="ChEBI" id="CHEBI:18420"/>
        <label>3</label>
    </ligand>
</feature>
<feature type="binding site" evidence="1">
    <location>
        <position position="229"/>
    </location>
    <ligand>
        <name>Mg(2+)</name>
        <dbReference type="ChEBI" id="CHEBI:18420"/>
        <label>3</label>
    </ligand>
</feature>
<feature type="binding site" evidence="1">
    <location>
        <position position="233"/>
    </location>
    <ligand>
        <name>Mg(2+)</name>
        <dbReference type="ChEBI" id="CHEBI:18420"/>
        <label>3</label>
    </ligand>
</feature>
<feature type="helix" evidence="9">
    <location>
        <begin position="20"/>
        <end position="34"/>
    </location>
</feature>
<feature type="strand" evidence="9">
    <location>
        <begin position="35"/>
        <end position="37"/>
    </location>
</feature>
<feature type="strand" evidence="9">
    <location>
        <begin position="39"/>
        <end position="41"/>
    </location>
</feature>
<feature type="helix" evidence="9">
    <location>
        <begin position="44"/>
        <end position="47"/>
    </location>
</feature>
<feature type="helix" evidence="9">
    <location>
        <begin position="51"/>
        <end position="58"/>
    </location>
</feature>
<feature type="helix" evidence="9">
    <location>
        <begin position="65"/>
        <end position="85"/>
    </location>
</feature>
<feature type="helix" evidence="9">
    <location>
        <begin position="97"/>
        <end position="111"/>
    </location>
</feature>
<feature type="helix" evidence="9">
    <location>
        <begin position="122"/>
        <end position="137"/>
    </location>
</feature>
<feature type="helix" evidence="9">
    <location>
        <begin position="143"/>
        <end position="166"/>
    </location>
</feature>
<feature type="helix" evidence="9">
    <location>
        <begin position="172"/>
        <end position="182"/>
    </location>
</feature>
<feature type="helix" evidence="9">
    <location>
        <begin position="185"/>
        <end position="195"/>
    </location>
</feature>
<feature type="helix" evidence="9">
    <location>
        <begin position="202"/>
        <end position="205"/>
    </location>
</feature>
<feature type="helix" evidence="9">
    <location>
        <begin position="208"/>
        <end position="235"/>
    </location>
</feature>
<feature type="helix" evidence="9">
    <location>
        <begin position="242"/>
        <end position="249"/>
    </location>
</feature>
<feature type="helix" evidence="9">
    <location>
        <begin position="254"/>
        <end position="278"/>
    </location>
</feature>
<feature type="helix" evidence="9">
    <location>
        <begin position="279"/>
        <end position="282"/>
    </location>
</feature>
<feature type="strand" evidence="9">
    <location>
        <begin position="286"/>
        <end position="288"/>
    </location>
</feature>
<feature type="helix" evidence="9">
    <location>
        <begin position="289"/>
        <end position="307"/>
    </location>
</feature>
<keyword id="KW-0002">3D-structure</keyword>
<keyword id="KW-0456">Lyase</keyword>
<keyword id="KW-0460">Magnesium</keyword>
<keyword id="KW-0479">Metal-binding</keyword>
<keyword id="KW-0614">Plasmid</keyword>
<keyword id="KW-1185">Reference proteome</keyword>
<sequence>MTISVPQLDCPLSRPVHPEGERADAYAVEWLRGVGLMADEADAAPVLAVGLGRLAACYVDENASWDTLAFMTILMAWYAEYDDRAIDSTGAIDGLTDAEVAELHRALGEILRDRPAPDPSDPVQRGLADVWRTLNGLASDWDRAAFVDTTLRYFEANRYERVNIRRGIPPTPSAHIGMRRHGGHVYGMYILGAAVNGYRPERRVLDHAAVRELETLAANYTSWANDLHSFAREHRMGQVNNLVWSVHHHEGLTFQQAADRVADLCDKELAAYLELRQTLPELGIPLTGATGRHVRFLEDMMWSMVDWSARSARYDVVPEAA</sequence>
<comment type="function">
    <text evidence="3 4 5">Terpene synthase that catalyzes the conversion of geranylgeranyl diphosphate (GGPP) into a mixture of diterpenes, including hydropyrene (HP), hydropyrenol (HPol), isoelisabethatriene and traces of isoelisabethatriene B (PubMed:25605043, PubMed:28696553, PubMed:35965858). Hydropyrene is the main product (PubMed:25605043, PubMed:28696553). Some other diterpenoids are also produced in very low quantities (PubMed:25605043).</text>
</comment>
<comment type="catalytic activity">
    <reaction evidence="3 4">
        <text>(2E,6E,10E)-geranylgeranyl diphosphate = hydropyrene + diphosphate</text>
        <dbReference type="Rhea" id="RHEA:59224"/>
        <dbReference type="ChEBI" id="CHEBI:33019"/>
        <dbReference type="ChEBI" id="CHEBI:58756"/>
        <dbReference type="ChEBI" id="CHEBI:142541"/>
        <dbReference type="EC" id="4.2.3.201"/>
    </reaction>
    <physiologicalReaction direction="left-to-right" evidence="3 4">
        <dbReference type="Rhea" id="RHEA:59225"/>
    </physiologicalReaction>
</comment>
<comment type="catalytic activity">
    <reaction evidence="3 4">
        <text>(2E,6E,10E)-geranylgeranyl diphosphate + H2O = hydropyrenol + diphosphate</text>
        <dbReference type="Rhea" id="RHEA:59232"/>
        <dbReference type="ChEBI" id="CHEBI:15377"/>
        <dbReference type="ChEBI" id="CHEBI:33019"/>
        <dbReference type="ChEBI" id="CHEBI:58756"/>
        <dbReference type="ChEBI" id="CHEBI:142542"/>
        <dbReference type="EC" id="4.2.3.202"/>
    </reaction>
    <physiologicalReaction direction="left-to-right" evidence="3 4">
        <dbReference type="Rhea" id="RHEA:59233"/>
    </physiologicalReaction>
</comment>
<comment type="catalytic activity">
    <reaction evidence="3 4">
        <text>(2E,6E,10E)-geranylgeranyl diphosphate = isoelisabethatriene + diphosphate</text>
        <dbReference type="Rhea" id="RHEA:59236"/>
        <dbReference type="ChEBI" id="CHEBI:33019"/>
        <dbReference type="ChEBI" id="CHEBI:58756"/>
        <dbReference type="ChEBI" id="CHEBI:142543"/>
        <dbReference type="EC" id="4.2.3.203"/>
    </reaction>
    <physiologicalReaction direction="left-to-right" evidence="3 4">
        <dbReference type="Rhea" id="RHEA:59237"/>
    </physiologicalReaction>
</comment>
<comment type="cofactor">
    <cofactor evidence="1">
        <name>Mg(2+)</name>
        <dbReference type="ChEBI" id="CHEBI:18420"/>
    </cofactor>
    <text evidence="1">Binds 3 Mg(2+) ions per subunit.</text>
</comment>
<comment type="pathway">
    <text evidence="7">Secondary metabolite biosynthesis; terpenoid biosynthesis.</text>
</comment>
<comment type="domain">
    <text evidence="2">Contains several highly conserved motifs that are important for catalytic activity including the aspartate-rich 'DDxx(x)D/E' motif and the 'NDxxSxxxD/E' motif, both of which are involved in complexing metal ions to coordinate the binding of the geranylgeranyl diphosphate substrate in the active site.</text>
</comment>
<comment type="similarity">
    <text evidence="7">Belongs to the terpene synthase family.</text>
</comment>